<accession>P0ADK9</accession>
<accession>P36564</accession>
<protein>
    <recommendedName>
        <fullName>Uncharacterized protein YibL</fullName>
    </recommendedName>
</protein>
<gene>
    <name type="primary">yibL</name>
    <name type="ordered locus">c4421</name>
</gene>
<name>YIBL_ECOL6</name>
<sequence length="120" mass="13696">MKEVEKNEIKRLSDRLDAIRHQQADLSLVEAADKYAELEKEKATLEAEIARLREVHSQKLSKEAQKLMKMPFQRAITKKEQADMGKLKKSVRGLVVVHPMTALGREMGLQEMTGFSKTAF</sequence>
<dbReference type="EMBL" id="AE014075">
    <property type="protein sequence ID" value="AAN82857.1"/>
    <property type="molecule type" value="Genomic_DNA"/>
</dbReference>
<dbReference type="RefSeq" id="WP_000665680.1">
    <property type="nucleotide sequence ID" value="NZ_CP051263.1"/>
</dbReference>
<dbReference type="BMRB" id="P0ADK9"/>
<dbReference type="SMR" id="P0ADK9"/>
<dbReference type="STRING" id="199310.c4421"/>
<dbReference type="KEGG" id="ecc:c4421"/>
<dbReference type="eggNOG" id="ENOG5031D5W">
    <property type="taxonomic scope" value="Bacteria"/>
</dbReference>
<dbReference type="HOGENOM" id="CLU_141025_0_0_6"/>
<dbReference type="BioCyc" id="ECOL199310:C4421-MONOMER"/>
<dbReference type="Proteomes" id="UP000001410">
    <property type="component" value="Chromosome"/>
</dbReference>
<dbReference type="FunFam" id="3.30.1370.150:FF:000001">
    <property type="entry name" value="YibL family ribosome-associated protein"/>
    <property type="match status" value="1"/>
</dbReference>
<dbReference type="FunFam" id="4.10.860.10:FF:000003">
    <property type="entry name" value="YibL family ribosome-associated protein"/>
    <property type="match status" value="1"/>
</dbReference>
<dbReference type="Gene3D" id="3.30.1370.150">
    <property type="entry name" value="Uncharacterised protein PF10928, DUF2810"/>
    <property type="match status" value="1"/>
</dbReference>
<dbReference type="Gene3D" id="4.10.860.10">
    <property type="entry name" value="UVR domain"/>
    <property type="match status" value="1"/>
</dbReference>
<dbReference type="InterPro" id="IPR021230">
    <property type="entry name" value="DUF2810"/>
</dbReference>
<dbReference type="NCBIfam" id="NF008244">
    <property type="entry name" value="PRK11020.1"/>
    <property type="match status" value="1"/>
</dbReference>
<dbReference type="Pfam" id="PF10928">
    <property type="entry name" value="DUF2810"/>
    <property type="match status" value="1"/>
</dbReference>
<proteinExistence type="predicted"/>
<keyword id="KW-1185">Reference proteome</keyword>
<organism>
    <name type="scientific">Escherichia coli O6:H1 (strain CFT073 / ATCC 700928 / UPEC)</name>
    <dbReference type="NCBI Taxonomy" id="199310"/>
    <lineage>
        <taxon>Bacteria</taxon>
        <taxon>Pseudomonadati</taxon>
        <taxon>Pseudomonadota</taxon>
        <taxon>Gammaproteobacteria</taxon>
        <taxon>Enterobacterales</taxon>
        <taxon>Enterobacteriaceae</taxon>
        <taxon>Escherichia</taxon>
    </lineage>
</organism>
<reference key="1">
    <citation type="journal article" date="2002" name="Proc. Natl. Acad. Sci. U.S.A.">
        <title>Extensive mosaic structure revealed by the complete genome sequence of uropathogenic Escherichia coli.</title>
        <authorList>
            <person name="Welch R.A."/>
            <person name="Burland V."/>
            <person name="Plunkett G. III"/>
            <person name="Redford P."/>
            <person name="Roesch P."/>
            <person name="Rasko D."/>
            <person name="Buckles E.L."/>
            <person name="Liou S.-R."/>
            <person name="Boutin A."/>
            <person name="Hackett J."/>
            <person name="Stroud D."/>
            <person name="Mayhew G.F."/>
            <person name="Rose D.J."/>
            <person name="Zhou S."/>
            <person name="Schwartz D.C."/>
            <person name="Perna N.T."/>
            <person name="Mobley H.L.T."/>
            <person name="Donnenberg M.S."/>
            <person name="Blattner F.R."/>
        </authorList>
    </citation>
    <scope>NUCLEOTIDE SEQUENCE [LARGE SCALE GENOMIC DNA]</scope>
    <source>
        <strain>CFT073 / ATCC 700928 / UPEC</strain>
    </source>
</reference>
<feature type="chain" id="PRO_0000169610" description="Uncharacterized protein YibL">
    <location>
        <begin position="1"/>
        <end position="120"/>
    </location>
</feature>